<reference key="1">
    <citation type="journal article" date="2005" name="J. Bacteriol.">
        <title>Swine and poultry pathogens: the complete genome sequences of two strains of Mycoplasma hyopneumoniae and a strain of Mycoplasma synoviae.</title>
        <authorList>
            <person name="Vasconcelos A.T.R."/>
            <person name="Ferreira H.B."/>
            <person name="Bizarro C.V."/>
            <person name="Bonatto S.L."/>
            <person name="Carvalho M.O."/>
            <person name="Pinto P.M."/>
            <person name="Almeida D.F."/>
            <person name="Almeida L.G.P."/>
            <person name="Almeida R."/>
            <person name="Alves-Junior L."/>
            <person name="Assuncao E.N."/>
            <person name="Azevedo V.A.C."/>
            <person name="Bogo M.R."/>
            <person name="Brigido M.M."/>
            <person name="Brocchi M."/>
            <person name="Burity H.A."/>
            <person name="Camargo A.A."/>
            <person name="Camargo S.S."/>
            <person name="Carepo M.S."/>
            <person name="Carraro D.M."/>
            <person name="de Mattos Cascardo J.C."/>
            <person name="Castro L.A."/>
            <person name="Cavalcanti G."/>
            <person name="Chemale G."/>
            <person name="Collevatti R.G."/>
            <person name="Cunha C.W."/>
            <person name="Dallagiovanna B."/>
            <person name="Dambros B.P."/>
            <person name="Dellagostin O.A."/>
            <person name="Falcao C."/>
            <person name="Fantinatti-Garboggini F."/>
            <person name="Felipe M.S.S."/>
            <person name="Fiorentin L."/>
            <person name="Franco G.R."/>
            <person name="Freitas N.S.A."/>
            <person name="Frias D."/>
            <person name="Grangeiro T.B."/>
            <person name="Grisard E.C."/>
            <person name="Guimaraes C.T."/>
            <person name="Hungria M."/>
            <person name="Jardim S.N."/>
            <person name="Krieger M.A."/>
            <person name="Laurino J.P."/>
            <person name="Lima L.F.A."/>
            <person name="Lopes M.I."/>
            <person name="Loreto E.L.S."/>
            <person name="Madeira H.M.F."/>
            <person name="Manfio G.P."/>
            <person name="Maranhao A.Q."/>
            <person name="Martinkovics C.T."/>
            <person name="Medeiros S.R.B."/>
            <person name="Moreira M.A.M."/>
            <person name="Neiva M."/>
            <person name="Ramalho-Neto C.E."/>
            <person name="Nicolas M.F."/>
            <person name="Oliveira S.C."/>
            <person name="Paixao R.F.C."/>
            <person name="Pedrosa F.O."/>
            <person name="Pena S.D.J."/>
            <person name="Pereira M."/>
            <person name="Pereira-Ferrari L."/>
            <person name="Piffer I."/>
            <person name="Pinto L.S."/>
            <person name="Potrich D.P."/>
            <person name="Salim A.C.M."/>
            <person name="Santos F.R."/>
            <person name="Schmitt R."/>
            <person name="Schneider M.P.C."/>
            <person name="Schrank A."/>
            <person name="Schrank I.S."/>
            <person name="Schuck A.F."/>
            <person name="Seuanez H.N."/>
            <person name="Silva D.W."/>
            <person name="Silva R."/>
            <person name="Silva S.C."/>
            <person name="Soares C.M.A."/>
            <person name="Souza K.R.L."/>
            <person name="Souza R.C."/>
            <person name="Staats C.C."/>
            <person name="Steffens M.B.R."/>
            <person name="Teixeira S.M.R."/>
            <person name="Urmenyi T.P."/>
            <person name="Vainstein M.H."/>
            <person name="Zuccherato L.W."/>
            <person name="Simpson A.J.G."/>
            <person name="Zaha A."/>
        </authorList>
    </citation>
    <scope>NUCLEOTIDE SEQUENCE [LARGE SCALE GENOMIC DNA]</scope>
    <source>
        <strain>53</strain>
    </source>
</reference>
<evidence type="ECO:0000255" key="1">
    <source>
        <dbReference type="HAMAP-Rule" id="MF_01008"/>
    </source>
</evidence>
<evidence type="ECO:0000255" key="2">
    <source>
        <dbReference type="PROSITE-ProRule" id="PRU01076"/>
    </source>
</evidence>
<feature type="chain" id="PRO_0000230093" description="Transcriptional regulator MraZ">
    <location>
        <begin position="1"/>
        <end position="147"/>
    </location>
</feature>
<feature type="domain" description="SpoVT-AbrB 1" evidence="2">
    <location>
        <begin position="5"/>
        <end position="47"/>
    </location>
</feature>
<feature type="domain" description="SpoVT-AbrB 2" evidence="2">
    <location>
        <begin position="76"/>
        <end position="123"/>
    </location>
</feature>
<proteinExistence type="inferred from homology"/>
<accession>Q4A666</accession>
<comment type="subunit">
    <text evidence="1">Forms oligomers.</text>
</comment>
<comment type="subcellular location">
    <subcellularLocation>
        <location evidence="1">Cytoplasm</location>
        <location evidence="1">Nucleoid</location>
    </subcellularLocation>
</comment>
<comment type="similarity">
    <text evidence="1">Belongs to the MraZ family.</text>
</comment>
<protein>
    <recommendedName>
        <fullName>Transcriptional regulator MraZ</fullName>
    </recommendedName>
</protein>
<keyword id="KW-0963">Cytoplasm</keyword>
<keyword id="KW-0238">DNA-binding</keyword>
<keyword id="KW-1185">Reference proteome</keyword>
<keyword id="KW-0677">Repeat</keyword>
<keyword id="KW-0804">Transcription</keyword>
<keyword id="KW-0805">Transcription regulation</keyword>
<name>MRAZ_MYCS5</name>
<gene>
    <name evidence="1" type="primary">mraZ</name>
    <name type="ordered locus">MS53_0343</name>
</gene>
<sequence length="147" mass="17091">MVFGQQLRNLDEKNRIALPPAFKNKLVEPLYLTIGFDGQADLRSEKEFEKFSAFLDQKNPFDAKIRQIKRQINSNTFEITLDKQGRITIPARIMQWIFAGEELGKEIYFVGAKDYVEIWSKSKFEALNEKVTPVGLEKLVEQAYNEK</sequence>
<dbReference type="EMBL" id="AE017245">
    <property type="protein sequence ID" value="AAZ43755.1"/>
    <property type="molecule type" value="Genomic_DNA"/>
</dbReference>
<dbReference type="RefSeq" id="WP_011283486.1">
    <property type="nucleotide sequence ID" value="NC_007294.1"/>
</dbReference>
<dbReference type="SMR" id="Q4A666"/>
<dbReference type="STRING" id="262723.MS53_0343"/>
<dbReference type="KEGG" id="msy:MS53_0343"/>
<dbReference type="eggNOG" id="COG2001">
    <property type="taxonomic scope" value="Bacteria"/>
</dbReference>
<dbReference type="HOGENOM" id="CLU_107907_2_2_14"/>
<dbReference type="OrthoDB" id="9807753at2"/>
<dbReference type="Proteomes" id="UP000000549">
    <property type="component" value="Chromosome"/>
</dbReference>
<dbReference type="GO" id="GO:0005737">
    <property type="term" value="C:cytoplasm"/>
    <property type="evidence" value="ECO:0007669"/>
    <property type="project" value="UniProtKB-UniRule"/>
</dbReference>
<dbReference type="GO" id="GO:0009295">
    <property type="term" value="C:nucleoid"/>
    <property type="evidence" value="ECO:0007669"/>
    <property type="project" value="UniProtKB-SubCell"/>
</dbReference>
<dbReference type="GO" id="GO:0003700">
    <property type="term" value="F:DNA-binding transcription factor activity"/>
    <property type="evidence" value="ECO:0007669"/>
    <property type="project" value="UniProtKB-UniRule"/>
</dbReference>
<dbReference type="GO" id="GO:0000976">
    <property type="term" value="F:transcription cis-regulatory region binding"/>
    <property type="evidence" value="ECO:0007669"/>
    <property type="project" value="TreeGrafter"/>
</dbReference>
<dbReference type="GO" id="GO:2000143">
    <property type="term" value="P:negative regulation of DNA-templated transcription initiation"/>
    <property type="evidence" value="ECO:0007669"/>
    <property type="project" value="TreeGrafter"/>
</dbReference>
<dbReference type="CDD" id="cd16321">
    <property type="entry name" value="MraZ_C"/>
    <property type="match status" value="1"/>
</dbReference>
<dbReference type="CDD" id="cd16320">
    <property type="entry name" value="MraZ_N"/>
    <property type="match status" value="1"/>
</dbReference>
<dbReference type="Gene3D" id="3.40.1550.20">
    <property type="entry name" value="Transcriptional regulator MraZ domain"/>
    <property type="match status" value="1"/>
</dbReference>
<dbReference type="HAMAP" id="MF_01008">
    <property type="entry name" value="MraZ"/>
    <property type="match status" value="1"/>
</dbReference>
<dbReference type="InterPro" id="IPR003444">
    <property type="entry name" value="MraZ"/>
</dbReference>
<dbReference type="InterPro" id="IPR035644">
    <property type="entry name" value="MraZ_C"/>
</dbReference>
<dbReference type="InterPro" id="IPR020603">
    <property type="entry name" value="MraZ_dom"/>
</dbReference>
<dbReference type="InterPro" id="IPR035642">
    <property type="entry name" value="MraZ_N"/>
</dbReference>
<dbReference type="InterPro" id="IPR038619">
    <property type="entry name" value="MraZ_sf"/>
</dbReference>
<dbReference type="InterPro" id="IPR007159">
    <property type="entry name" value="SpoVT-AbrB_dom"/>
</dbReference>
<dbReference type="InterPro" id="IPR037914">
    <property type="entry name" value="SpoVT-AbrB_sf"/>
</dbReference>
<dbReference type="PANTHER" id="PTHR34701">
    <property type="entry name" value="TRANSCRIPTIONAL REGULATOR MRAZ"/>
    <property type="match status" value="1"/>
</dbReference>
<dbReference type="PANTHER" id="PTHR34701:SF1">
    <property type="entry name" value="TRANSCRIPTIONAL REGULATOR MRAZ"/>
    <property type="match status" value="1"/>
</dbReference>
<dbReference type="Pfam" id="PF02381">
    <property type="entry name" value="MraZ"/>
    <property type="match status" value="2"/>
</dbReference>
<dbReference type="SUPFAM" id="SSF89447">
    <property type="entry name" value="AbrB/MazE/MraZ-like"/>
    <property type="match status" value="1"/>
</dbReference>
<dbReference type="PROSITE" id="PS51740">
    <property type="entry name" value="SPOVT_ABRB"/>
    <property type="match status" value="2"/>
</dbReference>
<organism>
    <name type="scientific">Mycoplasmopsis synoviae (strain 53)</name>
    <name type="common">Mycoplasma synoviae</name>
    <dbReference type="NCBI Taxonomy" id="262723"/>
    <lineage>
        <taxon>Bacteria</taxon>
        <taxon>Bacillati</taxon>
        <taxon>Mycoplasmatota</taxon>
        <taxon>Mycoplasmoidales</taxon>
        <taxon>Metamycoplasmataceae</taxon>
        <taxon>Mycoplasmopsis</taxon>
    </lineage>
</organism>